<organism>
    <name type="scientific">Listeria monocytogenes serotype 4a (strain HCC23)</name>
    <dbReference type="NCBI Taxonomy" id="552536"/>
    <lineage>
        <taxon>Bacteria</taxon>
        <taxon>Bacillati</taxon>
        <taxon>Bacillota</taxon>
        <taxon>Bacilli</taxon>
        <taxon>Bacillales</taxon>
        <taxon>Listeriaceae</taxon>
        <taxon>Listeria</taxon>
    </lineage>
</organism>
<evidence type="ECO:0000255" key="1">
    <source>
        <dbReference type="HAMAP-Rule" id="MF_00267"/>
    </source>
</evidence>
<gene>
    <name evidence="1" type="primary">minC</name>
    <name type="ordered locus">LMHCC_1024</name>
</gene>
<protein>
    <recommendedName>
        <fullName evidence="1">Probable septum site-determining protein MinC</fullName>
    </recommendedName>
</protein>
<name>MINC_LISMH</name>
<reference key="1">
    <citation type="journal article" date="2011" name="J. Bacteriol.">
        <title>Genome sequence of lineage III Listeria monocytogenes strain HCC23.</title>
        <authorList>
            <person name="Steele C.L."/>
            <person name="Donaldson J.R."/>
            <person name="Paul D."/>
            <person name="Banes M.M."/>
            <person name="Arick T."/>
            <person name="Bridges S.M."/>
            <person name="Lawrence M.L."/>
        </authorList>
    </citation>
    <scope>NUCLEOTIDE SEQUENCE [LARGE SCALE GENOMIC DNA]</scope>
    <source>
        <strain>HCC23</strain>
    </source>
</reference>
<dbReference type="EMBL" id="CP001175">
    <property type="protein sequence ID" value="ACK39372.1"/>
    <property type="molecule type" value="Genomic_DNA"/>
</dbReference>
<dbReference type="RefSeq" id="WP_003730221.1">
    <property type="nucleotide sequence ID" value="NC_011660.1"/>
</dbReference>
<dbReference type="SMR" id="B8DHK3"/>
<dbReference type="KEGG" id="lmh:LMHCC_1024"/>
<dbReference type="HOGENOM" id="CLU_048711_1_1_9"/>
<dbReference type="GO" id="GO:0000902">
    <property type="term" value="P:cell morphogenesis"/>
    <property type="evidence" value="ECO:0007669"/>
    <property type="project" value="InterPro"/>
</dbReference>
<dbReference type="GO" id="GO:0000917">
    <property type="term" value="P:division septum assembly"/>
    <property type="evidence" value="ECO:0007669"/>
    <property type="project" value="UniProtKB-KW"/>
</dbReference>
<dbReference type="GO" id="GO:1901891">
    <property type="term" value="P:regulation of cell septum assembly"/>
    <property type="evidence" value="ECO:0007669"/>
    <property type="project" value="InterPro"/>
</dbReference>
<dbReference type="FunFam" id="2.160.20.70:FF:000013">
    <property type="entry name" value="Probable septum site-determining protein MinC"/>
    <property type="match status" value="1"/>
</dbReference>
<dbReference type="Gene3D" id="2.160.20.70">
    <property type="match status" value="1"/>
</dbReference>
<dbReference type="Gene3D" id="3.30.160.540">
    <property type="match status" value="1"/>
</dbReference>
<dbReference type="HAMAP" id="MF_00267">
    <property type="entry name" value="MinC"/>
    <property type="match status" value="1"/>
</dbReference>
<dbReference type="InterPro" id="IPR016098">
    <property type="entry name" value="CAP/MinC_C"/>
</dbReference>
<dbReference type="InterPro" id="IPR013033">
    <property type="entry name" value="MinC"/>
</dbReference>
<dbReference type="InterPro" id="IPR036145">
    <property type="entry name" value="MinC_C_sf"/>
</dbReference>
<dbReference type="InterPro" id="IPR055219">
    <property type="entry name" value="MinC_N_1"/>
</dbReference>
<dbReference type="InterPro" id="IPR005526">
    <property type="entry name" value="Septum_form_inhib_MinC_C"/>
</dbReference>
<dbReference type="NCBIfam" id="NF001772">
    <property type="entry name" value="PRK00513.1-3"/>
    <property type="match status" value="1"/>
</dbReference>
<dbReference type="PANTHER" id="PTHR34108">
    <property type="entry name" value="SEPTUM SITE-DETERMINING PROTEIN MINC"/>
    <property type="match status" value="1"/>
</dbReference>
<dbReference type="PANTHER" id="PTHR34108:SF1">
    <property type="entry name" value="SEPTUM SITE-DETERMINING PROTEIN MINC"/>
    <property type="match status" value="1"/>
</dbReference>
<dbReference type="Pfam" id="PF03775">
    <property type="entry name" value="MinC_C"/>
    <property type="match status" value="1"/>
</dbReference>
<dbReference type="Pfam" id="PF22642">
    <property type="entry name" value="MinC_N_1"/>
    <property type="match status" value="1"/>
</dbReference>
<dbReference type="SUPFAM" id="SSF63848">
    <property type="entry name" value="Cell-division inhibitor MinC, C-terminal domain"/>
    <property type="match status" value="1"/>
</dbReference>
<proteinExistence type="inferred from homology"/>
<feature type="chain" id="PRO_1000191251" description="Probable septum site-determining protein MinC">
    <location>
        <begin position="1"/>
        <end position="225"/>
    </location>
</feature>
<accession>B8DHK3</accession>
<sequence>MKKNVQIKGTKDGISIFLSDKASILELQQELTQLLADQKQNPYSGEKLEVQVQIGNRLFSEEEEREISTIIHKNSQMKISAFYSNVMSKDEAKKWKENDQIFSMATIIRSGQVVQVPGDFLLIGDVNPGGQIRSNGNVFVLGNIKGIIHAGFEGNENAVVAGKFLYPSQVRIAGKVYGFDSEDYKEVTETDLFSAFVNDAGEIVIDGIHKIRKIRPEISNFQGGR</sequence>
<comment type="function">
    <text evidence="1">Cell division inhibitor that blocks the formation of polar Z ring septums. Rapidly oscillates between the poles of the cell to destabilize FtsZ filaments that have formed before they mature into polar Z rings. Prevents FtsZ polymerization.</text>
</comment>
<comment type="subunit">
    <text evidence="1">Interacts with MinD and FtsZ.</text>
</comment>
<comment type="similarity">
    <text evidence="1">Belongs to the MinC family.</text>
</comment>
<keyword id="KW-0131">Cell cycle</keyword>
<keyword id="KW-0132">Cell division</keyword>
<keyword id="KW-0717">Septation</keyword>